<evidence type="ECO:0000250" key="1"/>
<evidence type="ECO:0000255" key="2"/>
<evidence type="ECO:0000305" key="3"/>
<organism>
    <name type="scientific">African swine fever virus (isolate Tick/South Africa/Pretoriuskop Pr4/1996)</name>
    <name type="common">ASFV</name>
    <dbReference type="NCBI Taxonomy" id="561443"/>
    <lineage>
        <taxon>Viruses</taxon>
        <taxon>Varidnaviria</taxon>
        <taxon>Bamfordvirae</taxon>
        <taxon>Nucleocytoviricota</taxon>
        <taxon>Pokkesviricetes</taxon>
        <taxon>Asfuvirales</taxon>
        <taxon>Asfarviridae</taxon>
        <taxon>Asfivirus</taxon>
        <taxon>African swine fever virus</taxon>
    </lineage>
</organism>
<name>KITH_ASFP4</name>
<protein>
    <recommendedName>
        <fullName>Thymidine kinase</fullName>
        <shortName>TDK</shortName>
        <ecNumber>2.7.1.21</ecNumber>
    </recommendedName>
</protein>
<comment type="function">
    <text evidence="1">Phosphorylates thymidine. ASFV replicates in the cytoplasm of infected cells and contains genes encoding a number of enzymes needed for DNA synthesis, including thymidine kinase. Important for growth in swine macrophages in vitro and is a virus virulence factor in swine (By similarity).</text>
</comment>
<comment type="catalytic activity">
    <reaction>
        <text>thymidine + ATP = dTMP + ADP + H(+)</text>
        <dbReference type="Rhea" id="RHEA:19129"/>
        <dbReference type="ChEBI" id="CHEBI:15378"/>
        <dbReference type="ChEBI" id="CHEBI:17748"/>
        <dbReference type="ChEBI" id="CHEBI:30616"/>
        <dbReference type="ChEBI" id="CHEBI:63528"/>
        <dbReference type="ChEBI" id="CHEBI:456216"/>
        <dbReference type="EC" id="2.7.1.21"/>
    </reaction>
</comment>
<comment type="similarity">
    <text evidence="3">Belongs to the thymidine kinase family.</text>
</comment>
<accession>P0C8I5</accession>
<dbReference type="EC" id="2.7.1.21"/>
<dbReference type="EMBL" id="AY261363">
    <property type="status" value="NOT_ANNOTATED_CDS"/>
    <property type="molecule type" value="Genomic_DNA"/>
</dbReference>
<dbReference type="SMR" id="P0C8I5"/>
<dbReference type="Proteomes" id="UP000000859">
    <property type="component" value="Segment"/>
</dbReference>
<dbReference type="GO" id="GO:0005524">
    <property type="term" value="F:ATP binding"/>
    <property type="evidence" value="ECO:0007669"/>
    <property type="project" value="UniProtKB-KW"/>
</dbReference>
<dbReference type="GO" id="GO:0046872">
    <property type="term" value="F:metal ion binding"/>
    <property type="evidence" value="ECO:0007669"/>
    <property type="project" value="UniProtKB-KW"/>
</dbReference>
<dbReference type="GO" id="GO:0004797">
    <property type="term" value="F:thymidine kinase activity"/>
    <property type="evidence" value="ECO:0007669"/>
    <property type="project" value="UniProtKB-EC"/>
</dbReference>
<dbReference type="GO" id="GO:0071897">
    <property type="term" value="P:DNA biosynthetic process"/>
    <property type="evidence" value="ECO:0007669"/>
    <property type="project" value="UniProtKB-KW"/>
</dbReference>
<dbReference type="GO" id="GO:0046104">
    <property type="term" value="P:thymidine metabolic process"/>
    <property type="evidence" value="ECO:0007669"/>
    <property type="project" value="TreeGrafter"/>
</dbReference>
<dbReference type="Gene3D" id="3.30.60.20">
    <property type="match status" value="1"/>
</dbReference>
<dbReference type="Gene3D" id="3.40.50.300">
    <property type="entry name" value="P-loop containing nucleotide triphosphate hydrolases"/>
    <property type="match status" value="1"/>
</dbReference>
<dbReference type="InterPro" id="IPR027417">
    <property type="entry name" value="P-loop_NTPase"/>
</dbReference>
<dbReference type="InterPro" id="IPR001267">
    <property type="entry name" value="Thymidine_kinase"/>
</dbReference>
<dbReference type="InterPro" id="IPR020633">
    <property type="entry name" value="Thymidine_kinase_CS"/>
</dbReference>
<dbReference type="PANTHER" id="PTHR11441">
    <property type="entry name" value="THYMIDINE KINASE"/>
    <property type="match status" value="1"/>
</dbReference>
<dbReference type="PANTHER" id="PTHR11441:SF0">
    <property type="entry name" value="THYMIDINE KINASE, CYTOSOLIC"/>
    <property type="match status" value="1"/>
</dbReference>
<dbReference type="Pfam" id="PF00265">
    <property type="entry name" value="TK"/>
    <property type="match status" value="1"/>
</dbReference>
<dbReference type="PIRSF" id="PIRSF035805">
    <property type="entry name" value="TK_cell"/>
    <property type="match status" value="1"/>
</dbReference>
<dbReference type="SUPFAM" id="SSF52540">
    <property type="entry name" value="P-loop containing nucleoside triphosphate hydrolases"/>
    <property type="match status" value="1"/>
</dbReference>
<dbReference type="PROSITE" id="PS00603">
    <property type="entry name" value="TK_CELLULAR_TYPE"/>
    <property type="match status" value="1"/>
</dbReference>
<reference key="1">
    <citation type="submission" date="2003-03" db="EMBL/GenBank/DDBJ databases">
        <title>African swine fever virus genomes.</title>
        <authorList>
            <person name="Kutish G.F."/>
            <person name="Rock D.L."/>
        </authorList>
    </citation>
    <scope>NUCLEOTIDE SEQUENCE [LARGE SCALE GENOMIC DNA]</scope>
</reference>
<keyword id="KW-0067">ATP-binding</keyword>
<keyword id="KW-0237">DNA synthesis</keyword>
<keyword id="KW-0418">Kinase</keyword>
<keyword id="KW-0479">Metal-binding</keyword>
<keyword id="KW-0547">Nucleotide-binding</keyword>
<keyword id="KW-0808">Transferase</keyword>
<keyword id="KW-0843">Virulence</keyword>
<keyword id="KW-0862">Zinc</keyword>
<sequence length="188" mass="21532">MNIIRKLKPGTISLVLGPMFAGKTTFLIHCIYMLERLEKKVVFIKSTKNTRDKTIKTHSGIQLRPKQCKIIESTQLSDVGSLTDIHAVVIDEAHFFDDLIKCRTWADEEKIIILAGLNASFEQKMFPSIVRIFPYCSWVKYIGRTCMKCNRHNACFNVRKNADKTLILAGGSELYVTCCNNCLKKYIY</sequence>
<gene>
    <name type="ordered locus">Pret-062</name>
</gene>
<feature type="chain" id="PRO_0000355224" description="Thymidine kinase">
    <location>
        <begin position="1"/>
        <end position="188"/>
    </location>
</feature>
<feature type="active site" description="Proton acceptor" evidence="2">
    <location>
        <position position="92"/>
    </location>
</feature>
<feature type="binding site" evidence="1">
    <location>
        <begin position="17"/>
        <end position="24"/>
    </location>
    <ligand>
        <name>ATP</name>
        <dbReference type="ChEBI" id="CHEBI:30616"/>
    </ligand>
</feature>
<feature type="binding site" evidence="1">
    <location>
        <position position="121"/>
    </location>
    <ligand>
        <name>substrate</name>
    </ligand>
</feature>
<feature type="binding site" evidence="1">
    <location>
        <position position="146"/>
    </location>
    <ligand>
        <name>Zn(2+)</name>
        <dbReference type="ChEBI" id="CHEBI:29105"/>
    </ligand>
</feature>
<feature type="binding site" evidence="1">
    <location>
        <position position="149"/>
    </location>
    <ligand>
        <name>Zn(2+)</name>
        <dbReference type="ChEBI" id="CHEBI:29105"/>
    </ligand>
</feature>
<feature type="binding site" evidence="1">
    <location>
        <begin position="166"/>
        <end position="170"/>
    </location>
    <ligand>
        <name>substrate</name>
    </ligand>
</feature>
<feature type="binding site" evidence="1">
    <location>
        <position position="179"/>
    </location>
    <ligand>
        <name>Zn(2+)</name>
        <dbReference type="ChEBI" id="CHEBI:29105"/>
    </ligand>
</feature>
<feature type="binding site" evidence="1">
    <location>
        <position position="182"/>
    </location>
    <ligand>
        <name>Zn(2+)</name>
        <dbReference type="ChEBI" id="CHEBI:29105"/>
    </ligand>
</feature>
<proteinExistence type="inferred from homology"/>
<organismHost>
    <name type="scientific">Ornithodoros</name>
    <name type="common">relapsing fever ticks</name>
    <dbReference type="NCBI Taxonomy" id="6937"/>
</organismHost>
<organismHost>
    <name type="scientific">Phacochoerus aethiopicus</name>
    <name type="common">Warthog</name>
    <dbReference type="NCBI Taxonomy" id="85517"/>
</organismHost>
<organismHost>
    <name type="scientific">Phacochoerus africanus</name>
    <name type="common">Warthog</name>
    <dbReference type="NCBI Taxonomy" id="41426"/>
</organismHost>
<organismHost>
    <name type="scientific">Potamochoerus larvatus</name>
    <name type="common">Bushpig</name>
    <dbReference type="NCBI Taxonomy" id="273792"/>
</organismHost>
<organismHost>
    <name type="scientific">Sus scrofa</name>
    <name type="common">Pig</name>
    <dbReference type="NCBI Taxonomy" id="9823"/>
</organismHost>